<feature type="chain" id="PRO_0000096061" description="Single-stranded DNA-binding protein 2">
    <location>
        <begin position="1"/>
        <end position="160"/>
    </location>
</feature>
<feature type="domain" description="SSB" evidence="1">
    <location>
        <begin position="2"/>
        <end position="104"/>
    </location>
</feature>
<feature type="region of interest" description="Disordered" evidence="2">
    <location>
        <begin position="107"/>
        <end position="160"/>
    </location>
</feature>
<feature type="short sequence motif" description="Important for interaction with partner proteins" evidence="1">
    <location>
        <begin position="155"/>
        <end position="160"/>
    </location>
</feature>
<feature type="compositionally biased region" description="Low complexity" evidence="2">
    <location>
        <begin position="115"/>
        <end position="129"/>
    </location>
</feature>
<feature type="compositionally biased region" description="Polar residues" evidence="2">
    <location>
        <begin position="130"/>
        <end position="144"/>
    </location>
</feature>
<name>SSB2_LISMO</name>
<evidence type="ECO:0000255" key="1">
    <source>
        <dbReference type="HAMAP-Rule" id="MF_00984"/>
    </source>
</evidence>
<evidence type="ECO:0000256" key="2">
    <source>
        <dbReference type="SAM" id="MobiDB-lite"/>
    </source>
</evidence>
<keyword id="KW-0227">DNA damage</keyword>
<keyword id="KW-0233">DNA recombination</keyword>
<keyword id="KW-0234">DNA repair</keyword>
<keyword id="KW-0235">DNA replication</keyword>
<keyword id="KW-0238">DNA-binding</keyword>
<keyword id="KW-1185">Reference proteome</keyword>
<comment type="function">
    <text evidence="1">Plays an important role in DNA replication, recombination and repair. Binds to ssDNA and to an array of partner proteins to recruit them to their sites of action during DNA metabolism.</text>
</comment>
<comment type="subunit">
    <text evidence="1">Homotetramer.</text>
</comment>
<accession>Q8Y4X1</accession>
<protein>
    <recommendedName>
        <fullName evidence="1">Single-stranded DNA-binding protein 2</fullName>
        <shortName evidence="1">SSB 2</shortName>
    </recommendedName>
</protein>
<reference key="1">
    <citation type="journal article" date="2001" name="Science">
        <title>Comparative genomics of Listeria species.</title>
        <authorList>
            <person name="Glaser P."/>
            <person name="Frangeul L."/>
            <person name="Buchrieser C."/>
            <person name="Rusniok C."/>
            <person name="Amend A."/>
            <person name="Baquero F."/>
            <person name="Berche P."/>
            <person name="Bloecker H."/>
            <person name="Brandt P."/>
            <person name="Chakraborty T."/>
            <person name="Charbit A."/>
            <person name="Chetouani F."/>
            <person name="Couve E."/>
            <person name="de Daruvar A."/>
            <person name="Dehoux P."/>
            <person name="Domann E."/>
            <person name="Dominguez-Bernal G."/>
            <person name="Duchaud E."/>
            <person name="Durant L."/>
            <person name="Dussurget O."/>
            <person name="Entian K.-D."/>
            <person name="Fsihi H."/>
            <person name="Garcia-del Portillo F."/>
            <person name="Garrido P."/>
            <person name="Gautier L."/>
            <person name="Goebel W."/>
            <person name="Gomez-Lopez N."/>
            <person name="Hain T."/>
            <person name="Hauf J."/>
            <person name="Jackson D."/>
            <person name="Jones L.-M."/>
            <person name="Kaerst U."/>
            <person name="Kreft J."/>
            <person name="Kuhn M."/>
            <person name="Kunst F."/>
            <person name="Kurapkat G."/>
            <person name="Madueno E."/>
            <person name="Maitournam A."/>
            <person name="Mata Vicente J."/>
            <person name="Ng E."/>
            <person name="Nedjari H."/>
            <person name="Nordsiek G."/>
            <person name="Novella S."/>
            <person name="de Pablos B."/>
            <person name="Perez-Diaz J.-C."/>
            <person name="Purcell R."/>
            <person name="Remmel B."/>
            <person name="Rose M."/>
            <person name="Schlueter T."/>
            <person name="Simoes N."/>
            <person name="Tierrez A."/>
            <person name="Vazquez-Boland J.-A."/>
            <person name="Voss H."/>
            <person name="Wehland J."/>
            <person name="Cossart P."/>
        </authorList>
    </citation>
    <scope>NUCLEOTIDE SEQUENCE [LARGE SCALE GENOMIC DNA]</scope>
    <source>
        <strain>ATCC BAA-679 / EGD-e</strain>
    </source>
</reference>
<dbReference type="EMBL" id="AL591982">
    <property type="protein sequence ID" value="CAD00386.1"/>
    <property type="molecule type" value="Genomic_DNA"/>
</dbReference>
<dbReference type="PIR" id="AD1363">
    <property type="entry name" value="AD1363"/>
</dbReference>
<dbReference type="RefSeq" id="NP_465832.1">
    <property type="nucleotide sequence ID" value="NC_003210.1"/>
</dbReference>
<dbReference type="SMR" id="Q8Y4X1"/>
<dbReference type="STRING" id="169963.gene:17594999"/>
<dbReference type="PaxDb" id="169963-lmo2308"/>
<dbReference type="EnsemblBacteria" id="CAD00386">
    <property type="protein sequence ID" value="CAD00386"/>
    <property type="gene ID" value="CAD00386"/>
</dbReference>
<dbReference type="GeneID" id="984487"/>
<dbReference type="KEGG" id="lmo:lmo2308"/>
<dbReference type="PATRIC" id="fig|169963.11.peg.2363"/>
<dbReference type="eggNOG" id="COG0629">
    <property type="taxonomic scope" value="Bacteria"/>
</dbReference>
<dbReference type="HOGENOM" id="CLU_078758_6_2_9"/>
<dbReference type="OrthoDB" id="9809878at2"/>
<dbReference type="PhylomeDB" id="Q8Y4X1"/>
<dbReference type="BioCyc" id="LMON169963:LMO2308-MONOMER"/>
<dbReference type="Proteomes" id="UP000000817">
    <property type="component" value="Chromosome"/>
</dbReference>
<dbReference type="GO" id="GO:0009295">
    <property type="term" value="C:nucleoid"/>
    <property type="evidence" value="ECO:0000318"/>
    <property type="project" value="GO_Central"/>
</dbReference>
<dbReference type="GO" id="GO:0008047">
    <property type="term" value="F:enzyme activator activity"/>
    <property type="evidence" value="ECO:0000318"/>
    <property type="project" value="GO_Central"/>
</dbReference>
<dbReference type="GO" id="GO:0003697">
    <property type="term" value="F:single-stranded DNA binding"/>
    <property type="evidence" value="ECO:0000318"/>
    <property type="project" value="GO_Central"/>
</dbReference>
<dbReference type="GO" id="GO:0006310">
    <property type="term" value="P:DNA recombination"/>
    <property type="evidence" value="ECO:0007669"/>
    <property type="project" value="UniProtKB-UniRule"/>
</dbReference>
<dbReference type="GO" id="GO:0006281">
    <property type="term" value="P:DNA repair"/>
    <property type="evidence" value="ECO:0007669"/>
    <property type="project" value="UniProtKB-UniRule"/>
</dbReference>
<dbReference type="GO" id="GO:0006260">
    <property type="term" value="P:DNA replication"/>
    <property type="evidence" value="ECO:0000318"/>
    <property type="project" value="GO_Central"/>
</dbReference>
<dbReference type="CDD" id="cd04496">
    <property type="entry name" value="SSB_OBF"/>
    <property type="match status" value="1"/>
</dbReference>
<dbReference type="FunFam" id="2.40.50.140:FF:000084">
    <property type="entry name" value="Single-stranded DNA-binding protein"/>
    <property type="match status" value="1"/>
</dbReference>
<dbReference type="Gene3D" id="2.40.50.140">
    <property type="entry name" value="Nucleic acid-binding proteins"/>
    <property type="match status" value="1"/>
</dbReference>
<dbReference type="HAMAP" id="MF_00984">
    <property type="entry name" value="SSB"/>
    <property type="match status" value="1"/>
</dbReference>
<dbReference type="InterPro" id="IPR012340">
    <property type="entry name" value="NA-bd_OB-fold"/>
</dbReference>
<dbReference type="InterPro" id="IPR000424">
    <property type="entry name" value="Primosome_PriB/ssb"/>
</dbReference>
<dbReference type="InterPro" id="IPR011344">
    <property type="entry name" value="ssDNA-bd"/>
</dbReference>
<dbReference type="NCBIfam" id="TIGR00621">
    <property type="entry name" value="ssb"/>
    <property type="match status" value="1"/>
</dbReference>
<dbReference type="PANTHER" id="PTHR10302">
    <property type="entry name" value="SINGLE-STRANDED DNA-BINDING PROTEIN"/>
    <property type="match status" value="1"/>
</dbReference>
<dbReference type="PANTHER" id="PTHR10302:SF27">
    <property type="entry name" value="SINGLE-STRANDED DNA-BINDING PROTEIN"/>
    <property type="match status" value="1"/>
</dbReference>
<dbReference type="Pfam" id="PF00436">
    <property type="entry name" value="SSB"/>
    <property type="match status" value="1"/>
</dbReference>
<dbReference type="PIRSF" id="PIRSF002070">
    <property type="entry name" value="SSB"/>
    <property type="match status" value="1"/>
</dbReference>
<dbReference type="SUPFAM" id="SSF50249">
    <property type="entry name" value="Nucleic acid-binding proteins"/>
    <property type="match status" value="1"/>
</dbReference>
<dbReference type="PROSITE" id="PS50935">
    <property type="entry name" value="SSB"/>
    <property type="match status" value="1"/>
</dbReference>
<organism>
    <name type="scientific">Listeria monocytogenes serovar 1/2a (strain ATCC BAA-679 / EGD-e)</name>
    <dbReference type="NCBI Taxonomy" id="169963"/>
    <lineage>
        <taxon>Bacteria</taxon>
        <taxon>Bacillati</taxon>
        <taxon>Bacillota</taxon>
        <taxon>Bacilli</taxon>
        <taxon>Bacillales</taxon>
        <taxon>Listeriaceae</taxon>
        <taxon>Listeria</taxon>
    </lineage>
</organism>
<gene>
    <name type="primary">ssb2</name>
    <name type="ordered locus">lmo2308</name>
</gene>
<sequence>MMNRVVLVGRLTKDPDLRYTPAGVAVATFTLAVNRTFTNQNGEREADFINCVVWRKPAENVANFLKKGSMAGVDGRVQTRNYEDNDGKRVFVTEVVAESVQFLEPKNNNVEGATSNNYQNKANYSNNNQTSSYRADTSQKSDSFASEGKPIDINEDDLPF</sequence>
<proteinExistence type="inferred from homology"/>